<organism>
    <name type="scientific">Mus musculus</name>
    <name type="common">Mouse</name>
    <dbReference type="NCBI Taxonomy" id="10090"/>
    <lineage>
        <taxon>Eukaryota</taxon>
        <taxon>Metazoa</taxon>
        <taxon>Chordata</taxon>
        <taxon>Craniata</taxon>
        <taxon>Vertebrata</taxon>
        <taxon>Euteleostomi</taxon>
        <taxon>Mammalia</taxon>
        <taxon>Eutheria</taxon>
        <taxon>Euarchontoglires</taxon>
        <taxon>Glires</taxon>
        <taxon>Rodentia</taxon>
        <taxon>Myomorpha</taxon>
        <taxon>Muroidea</taxon>
        <taxon>Muridae</taxon>
        <taxon>Murinae</taxon>
        <taxon>Mus</taxon>
        <taxon>Mus</taxon>
    </lineage>
</organism>
<name>PRS4_MOUSE</name>
<feature type="initiator methionine" description="Removed" evidence="9">
    <location>
        <position position="1"/>
    </location>
</feature>
<feature type="chain" id="PRO_0000084678" description="26S proteasome regulatory subunit 4">
    <location>
        <begin position="2"/>
        <end position="440"/>
    </location>
</feature>
<feature type="region of interest" description="Disordered" evidence="4">
    <location>
        <begin position="1"/>
        <end position="49"/>
    </location>
</feature>
<feature type="region of interest" description="Disordered" evidence="4">
    <location>
        <begin position="84"/>
        <end position="104"/>
    </location>
</feature>
<feature type="compositionally biased region" description="Gly residues" evidence="4">
    <location>
        <begin position="1"/>
        <end position="13"/>
    </location>
</feature>
<feature type="compositionally biased region" description="Basic and acidic residues" evidence="4">
    <location>
        <begin position="14"/>
        <end position="26"/>
    </location>
</feature>
<feature type="compositionally biased region" description="Basic and acidic residues" evidence="4">
    <location>
        <begin position="86"/>
        <end position="103"/>
    </location>
</feature>
<feature type="binding site" evidence="3">
    <location>
        <begin position="226"/>
        <end position="233"/>
    </location>
    <ligand>
        <name>ATP</name>
        <dbReference type="ChEBI" id="CHEBI:30616"/>
    </ligand>
</feature>
<feature type="modified residue" description="Phosphoserine" evidence="2">
    <location>
        <position position="4"/>
    </location>
</feature>
<feature type="modified residue" description="Phosphothreonine" evidence="2">
    <location>
        <position position="53"/>
    </location>
</feature>
<feature type="modified residue" description="N6-acetyllysine" evidence="12">
    <location>
        <position position="258"/>
    </location>
</feature>
<feature type="modified residue" description="Phosphothreonine" evidence="11">
    <location>
        <position position="434"/>
    </location>
</feature>
<feature type="modified residue" description="Phosphotyrosine" evidence="2">
    <location>
        <position position="439"/>
    </location>
</feature>
<feature type="lipid moiety-binding region" description="N-myristoyl glycine" evidence="9">
    <location>
        <position position="2"/>
    </location>
</feature>
<feature type="cross-link" description="Glycyl lysine isopeptide (Lys-Gly) (interchain with G-Cter in ubiquitin)" evidence="2">
    <location>
        <position position="237"/>
    </location>
</feature>
<gene>
    <name type="primary">Psmc1</name>
</gene>
<comment type="function">
    <text evidence="2">Component of the 26S proteasome, a multiprotein complex involved in the ATP-dependent degradation of ubiquitinated proteins. This complex plays a key role in the maintenance of protein homeostasis by removing misfolded or damaged proteins, which could impair cellular functions, and by removing proteins whose functions are no longer required. Therefore, the proteasome participates in numerous cellular processes, including cell cycle progression, apoptosis, or DNA damage repair. PSMC1 belongs to the heterohexameric ring of AAA (ATPases associated with diverse cellular activities) proteins that unfolds ubiquitinated target proteins that are concurrently translocated into a proteolytic chamber and degraded into peptides.</text>
</comment>
<comment type="subunit">
    <text evidence="2 5 6 7 8 9">Component of the 19S proteasome regulatory particle complex. The 26S proteasome consists of a 20S core particle (CP) and two 19S regulatory subunits (RP). The regulatory particle is made of a lid composed of 9 subunits, a base containing 6 ATPases including PSMC1 and few additional components. Interacts with SCA7. Interacts with NGLY1. Interacts with PAAF1.</text>
</comment>
<comment type="subcellular location">
    <subcellularLocation>
        <location evidence="1">Cytoplasm</location>
    </subcellularLocation>
    <subcellularLocation>
        <location evidence="1">Nucleus</location>
    </subcellularLocation>
    <subcellularLocation>
        <location evidence="2">Membrane</location>
        <topology evidence="2">Lipid-anchor</topology>
    </subcellularLocation>
</comment>
<comment type="similarity">
    <text evidence="10">Belongs to the AAA ATPase family.</text>
</comment>
<proteinExistence type="evidence at protein level"/>
<protein>
    <recommendedName>
        <fullName>26S proteasome regulatory subunit 4</fullName>
        <shortName>P26s4</shortName>
    </recommendedName>
    <alternativeName>
        <fullName>26S proteasome AAA-ATPase subunit RPT2</fullName>
    </alternativeName>
    <alternativeName>
        <fullName>Proteasome 26S subunit ATPase 1</fullName>
    </alternativeName>
</protein>
<reference key="1">
    <citation type="journal article" date="1996" name="Genomics">
        <title>Genomic organization and mapping of the mouse P26s4 ATPase gene: a member of the remarkably conserved AAA gene family.</title>
        <authorList>
            <person name="Hoyle J."/>
            <person name="Fisher E.M.C."/>
        </authorList>
    </citation>
    <scope>NUCLEOTIDE SEQUENCE [MRNA]</scope>
    <source>
        <tissue>Mammary tumor</tissue>
    </source>
</reference>
<reference key="2">
    <citation type="journal article" date="2004" name="Genome Res.">
        <title>The status, quality, and expansion of the NIH full-length cDNA project: the Mammalian Gene Collection (MGC).</title>
        <authorList>
            <consortium name="The MGC Project Team"/>
        </authorList>
    </citation>
    <scope>NUCLEOTIDE SEQUENCE [LARGE SCALE MRNA]</scope>
    <source>
        <tissue>Mammary tumor</tissue>
    </source>
</reference>
<reference key="3">
    <citation type="journal article" date="2001" name="Proc. Natl. Acad. Sci. U.S.A.">
        <title>Identification of proteins that interact with mammalian peptide:N-glycanase and implicate this hydrolase in the proteasome-dependent pathway for protein degradation.</title>
        <authorList>
            <person name="Park H."/>
            <person name="Suzuki T."/>
            <person name="Lennarz W.J."/>
        </authorList>
    </citation>
    <scope>INTERACTION WITH NGLY1</scope>
</reference>
<reference key="4">
    <citation type="journal article" date="2004" name="Proc. Natl. Acad. Sci. U.S.A.">
        <title>A complex between peptide:N-glycanase and two proteasome-linked proteins suggests a mechanism for the degradation of misfolded glycoproteins.</title>
        <authorList>
            <person name="Katiyar S."/>
            <person name="Li G."/>
            <person name="Lennarz W.J."/>
        </authorList>
    </citation>
    <scope>INTERACTION WITH NGLY1</scope>
</reference>
<reference key="5">
    <citation type="journal article" date="2005" name="Proc. Natl. Acad. Sci. U.S.A.">
        <title>Multiple modes of interaction of the deglycosylation enzyme, mouse peptide N-glycanase, with the proteasome.</title>
        <authorList>
            <person name="Li G."/>
            <person name="Zhou X."/>
            <person name="Zhao G."/>
            <person name="Schindelin H."/>
            <person name="Lennarz W.J."/>
        </authorList>
    </citation>
    <scope>INTERACTION WITH NGLY1</scope>
</reference>
<reference key="6">
    <citation type="journal article" date="2006" name="Proc. Natl. Acad. Sci. U.S.A.">
        <authorList>
            <person name="Li G."/>
            <person name="Zhou X."/>
            <person name="Zhao G."/>
            <person name="Schindelin H."/>
            <person name="Lennarz W.J."/>
        </authorList>
    </citation>
    <scope>ERRATUM OF PUBMED:16249333</scope>
</reference>
<reference key="7">
    <citation type="journal article" date="2006" name="Proc. Natl. Acad. Sci. U.S.A.">
        <title>The AAA ATPase p97 links peptide N-glycanase to the endoplasmic reticulum-associated E3 ligase autocrine motility factor receptor.</title>
        <authorList>
            <person name="Li G."/>
            <person name="Zhao G."/>
            <person name="Zhou X."/>
            <person name="Schindelin H."/>
            <person name="Lennarz W.J."/>
        </authorList>
    </citation>
    <scope>INTERACTION WITH NGLY1</scope>
</reference>
<reference key="8">
    <citation type="journal article" date="2006" name="Circ. Res.">
        <title>Mapping the murine cardiac 26S proteasome complexes.</title>
        <authorList>
            <person name="Gomes A.V."/>
            <person name="Zong C."/>
            <person name="Edmondson R.D."/>
            <person name="Li X."/>
            <person name="Stefani E."/>
            <person name="Zhang J."/>
            <person name="Jones R.C."/>
            <person name="Thyparambil S."/>
            <person name="Wang G.W."/>
            <person name="Qiao X."/>
            <person name="Bardag-Gorce F."/>
            <person name="Ping P."/>
        </authorList>
    </citation>
    <scope>IDENTIFICATION IN THE 19S PROTEASOME REGULATORY COMPLEX</scope>
    <scope>MYRISTOYLATION AT GLY-2</scope>
</reference>
<reference key="9">
    <citation type="journal article" date="2010" name="Cell">
        <title>A tissue-specific atlas of mouse protein phosphorylation and expression.</title>
        <authorList>
            <person name="Huttlin E.L."/>
            <person name="Jedrychowski M.P."/>
            <person name="Elias J.E."/>
            <person name="Goswami T."/>
            <person name="Rad R."/>
            <person name="Beausoleil S.A."/>
            <person name="Villen J."/>
            <person name="Haas W."/>
            <person name="Sowa M.E."/>
            <person name="Gygi S.P."/>
        </authorList>
    </citation>
    <scope>PHOSPHORYLATION [LARGE SCALE ANALYSIS] AT THR-434</scope>
    <scope>IDENTIFICATION BY MASS SPECTROMETRY [LARGE SCALE ANALYSIS]</scope>
    <source>
        <tissue>Brain</tissue>
        <tissue>Brown adipose tissue</tissue>
        <tissue>Heart</tissue>
        <tissue>Kidney</tissue>
        <tissue>Liver</tissue>
        <tissue>Lung</tissue>
        <tissue>Pancreas</tissue>
        <tissue>Spleen</tissue>
        <tissue>Testis</tissue>
    </source>
</reference>
<reference key="10">
    <citation type="journal article" date="2013" name="Mol. Cell">
        <title>SIRT5-mediated lysine desuccinylation impacts diverse metabolic pathways.</title>
        <authorList>
            <person name="Park J."/>
            <person name="Chen Y."/>
            <person name="Tishkoff D.X."/>
            <person name="Peng C."/>
            <person name="Tan M."/>
            <person name="Dai L."/>
            <person name="Xie Z."/>
            <person name="Zhang Y."/>
            <person name="Zwaans B.M."/>
            <person name="Skinner M.E."/>
            <person name="Lombard D.B."/>
            <person name="Zhao Y."/>
        </authorList>
    </citation>
    <scope>ACETYLATION [LARGE SCALE ANALYSIS] AT LYS-258</scope>
    <scope>IDENTIFICATION BY MASS SPECTROMETRY [LARGE SCALE ANALYSIS]</scope>
    <source>
        <tissue>Embryonic fibroblast</tissue>
    </source>
</reference>
<accession>P62192</accession>
<accession>P49014</accession>
<accession>Q03527</accession>
<accession>Q96AZ3</accession>
<evidence type="ECO:0000250" key="1"/>
<evidence type="ECO:0000250" key="2">
    <source>
        <dbReference type="UniProtKB" id="P62191"/>
    </source>
</evidence>
<evidence type="ECO:0000255" key="3"/>
<evidence type="ECO:0000256" key="4">
    <source>
        <dbReference type="SAM" id="MobiDB-lite"/>
    </source>
</evidence>
<evidence type="ECO:0000269" key="5">
    <source>
    </source>
</evidence>
<evidence type="ECO:0000269" key="6">
    <source>
    </source>
</evidence>
<evidence type="ECO:0000269" key="7">
    <source>
    </source>
</evidence>
<evidence type="ECO:0000269" key="8">
    <source>
    </source>
</evidence>
<evidence type="ECO:0000269" key="9">
    <source>
    </source>
</evidence>
<evidence type="ECO:0000305" key="10"/>
<evidence type="ECO:0007744" key="11">
    <source>
    </source>
</evidence>
<evidence type="ECO:0007744" key="12">
    <source>
    </source>
</evidence>
<keyword id="KW-0007">Acetylation</keyword>
<keyword id="KW-0067">ATP-binding</keyword>
<keyword id="KW-0963">Cytoplasm</keyword>
<keyword id="KW-1017">Isopeptide bond</keyword>
<keyword id="KW-0449">Lipoprotein</keyword>
<keyword id="KW-0472">Membrane</keyword>
<keyword id="KW-0519">Myristate</keyword>
<keyword id="KW-0547">Nucleotide-binding</keyword>
<keyword id="KW-0539">Nucleus</keyword>
<keyword id="KW-0597">Phosphoprotein</keyword>
<keyword id="KW-0647">Proteasome</keyword>
<keyword id="KW-1185">Reference proteome</keyword>
<keyword id="KW-0832">Ubl conjugation</keyword>
<dbReference type="EMBL" id="U39302">
    <property type="protein sequence ID" value="AAB34137.1"/>
    <property type="molecule type" value="mRNA"/>
</dbReference>
<dbReference type="EMBL" id="BC003860">
    <property type="protein sequence ID" value="AAH03860.1"/>
    <property type="molecule type" value="mRNA"/>
</dbReference>
<dbReference type="CCDS" id="CCDS36522.1"/>
<dbReference type="RefSeq" id="NP_032973.1">
    <property type="nucleotide sequence ID" value="NM_008947.3"/>
</dbReference>
<dbReference type="SMR" id="P62192"/>
<dbReference type="BioGRID" id="202426">
    <property type="interactions" value="63"/>
</dbReference>
<dbReference type="FunCoup" id="P62192">
    <property type="interactions" value="2838"/>
</dbReference>
<dbReference type="IntAct" id="P62192">
    <property type="interactions" value="5"/>
</dbReference>
<dbReference type="MINT" id="P62192"/>
<dbReference type="STRING" id="10090.ENSMUSP00000021595"/>
<dbReference type="GlyGen" id="P62192">
    <property type="glycosylation" value="4 sites, 1 N-linked glycan (1 site), 1 O-linked glycan (3 sites)"/>
</dbReference>
<dbReference type="iPTMnet" id="P62192"/>
<dbReference type="PhosphoSitePlus" id="P62192"/>
<dbReference type="SwissPalm" id="P62192"/>
<dbReference type="REPRODUCTION-2DPAGE" id="IPI00133428"/>
<dbReference type="jPOST" id="P62192"/>
<dbReference type="PaxDb" id="10090-ENSMUSP00000021595"/>
<dbReference type="PeptideAtlas" id="P62192"/>
<dbReference type="ProteomicsDB" id="291570"/>
<dbReference type="Pumba" id="P62192"/>
<dbReference type="Antibodypedia" id="82">
    <property type="antibodies" value="182 antibodies from 33 providers"/>
</dbReference>
<dbReference type="DNASU" id="19179"/>
<dbReference type="Ensembl" id="ENSMUST00000021595.10">
    <property type="protein sequence ID" value="ENSMUSP00000021595.9"/>
    <property type="gene ID" value="ENSMUSG00000021178.10"/>
</dbReference>
<dbReference type="GeneID" id="19179"/>
<dbReference type="KEGG" id="mmu:19179"/>
<dbReference type="UCSC" id="uc007osn.2">
    <property type="organism name" value="mouse"/>
</dbReference>
<dbReference type="AGR" id="MGI:106054"/>
<dbReference type="CTD" id="5700"/>
<dbReference type="MGI" id="MGI:106054">
    <property type="gene designation" value="Psmc1"/>
</dbReference>
<dbReference type="VEuPathDB" id="HostDB:ENSMUSG00000021178"/>
<dbReference type="eggNOG" id="KOG0726">
    <property type="taxonomic scope" value="Eukaryota"/>
</dbReference>
<dbReference type="GeneTree" id="ENSGT01020000230346"/>
<dbReference type="HOGENOM" id="CLU_000688_2_3_1"/>
<dbReference type="InParanoid" id="P62192"/>
<dbReference type="OMA" id="QDDTDPM"/>
<dbReference type="OrthoDB" id="10255768at2759"/>
<dbReference type="PhylomeDB" id="P62192"/>
<dbReference type="TreeFam" id="TF106226"/>
<dbReference type="BRENDA" id="5.6.1.5">
    <property type="organism ID" value="3474"/>
</dbReference>
<dbReference type="Reactome" id="R-MMU-1169091">
    <property type="pathway name" value="Activation of NF-kappaB in B cells"/>
</dbReference>
<dbReference type="Reactome" id="R-MMU-1234176">
    <property type="pathway name" value="Oxygen-dependent proline hydroxylation of Hypoxia-inducible Factor Alpha"/>
</dbReference>
<dbReference type="Reactome" id="R-MMU-1236978">
    <property type="pathway name" value="Cross-presentation of soluble exogenous antigens (endosomes)"/>
</dbReference>
<dbReference type="Reactome" id="R-MMU-174084">
    <property type="pathway name" value="Autodegradation of Cdh1 by Cdh1:APC/C"/>
</dbReference>
<dbReference type="Reactome" id="R-MMU-174154">
    <property type="pathway name" value="APC/C:Cdc20 mediated degradation of Securin"/>
</dbReference>
<dbReference type="Reactome" id="R-MMU-174178">
    <property type="pathway name" value="APC/C:Cdh1 mediated degradation of Cdc20 and other APC/C:Cdh1 targeted proteins in late mitosis/early G1"/>
</dbReference>
<dbReference type="Reactome" id="R-MMU-174184">
    <property type="pathway name" value="Cdc20:Phospho-APC/C mediated degradation of Cyclin A"/>
</dbReference>
<dbReference type="Reactome" id="R-MMU-187577">
    <property type="pathway name" value="SCF(Skp2)-mediated degradation of p27/p21"/>
</dbReference>
<dbReference type="Reactome" id="R-MMU-195253">
    <property type="pathway name" value="Degradation of beta-catenin by the destruction complex"/>
</dbReference>
<dbReference type="Reactome" id="R-MMU-202424">
    <property type="pathway name" value="Downstream TCR signaling"/>
</dbReference>
<dbReference type="Reactome" id="R-MMU-2467813">
    <property type="pathway name" value="Separation of Sister Chromatids"/>
</dbReference>
<dbReference type="Reactome" id="R-MMU-2871837">
    <property type="pathway name" value="FCERI mediated NF-kB activation"/>
</dbReference>
<dbReference type="Reactome" id="R-MMU-349425">
    <property type="pathway name" value="Autodegradation of the E3 ubiquitin ligase COP1"/>
</dbReference>
<dbReference type="Reactome" id="R-MMU-350562">
    <property type="pathway name" value="Regulation of ornithine decarboxylase (ODC)"/>
</dbReference>
<dbReference type="Reactome" id="R-MMU-382556">
    <property type="pathway name" value="ABC-family proteins mediated transport"/>
</dbReference>
<dbReference type="Reactome" id="R-MMU-450408">
    <property type="pathway name" value="AUF1 (hnRNP D0) binds and destabilizes mRNA"/>
</dbReference>
<dbReference type="Reactome" id="R-MMU-4608870">
    <property type="pathway name" value="Asymmetric localization of PCP proteins"/>
</dbReference>
<dbReference type="Reactome" id="R-MMU-4641257">
    <property type="pathway name" value="Degradation of AXIN"/>
</dbReference>
<dbReference type="Reactome" id="R-MMU-4641258">
    <property type="pathway name" value="Degradation of DVL"/>
</dbReference>
<dbReference type="Reactome" id="R-MMU-532668">
    <property type="pathway name" value="N-glycan trimming in the ER and Calnexin/Calreticulin cycle"/>
</dbReference>
<dbReference type="Reactome" id="R-MMU-5358346">
    <property type="pathway name" value="Hedgehog ligand biogenesis"/>
</dbReference>
<dbReference type="Reactome" id="R-MMU-5607761">
    <property type="pathway name" value="Dectin-1 mediated noncanonical NF-kB signaling"/>
</dbReference>
<dbReference type="Reactome" id="R-MMU-5607764">
    <property type="pathway name" value="CLEC7A (Dectin-1) signaling"/>
</dbReference>
<dbReference type="Reactome" id="R-MMU-5610780">
    <property type="pathway name" value="Degradation of GLI1 by the proteasome"/>
</dbReference>
<dbReference type="Reactome" id="R-MMU-5610785">
    <property type="pathway name" value="GLI3 is processed to GLI3R by the proteasome"/>
</dbReference>
<dbReference type="Reactome" id="R-MMU-5632684">
    <property type="pathway name" value="Hedgehog 'on' state"/>
</dbReference>
<dbReference type="Reactome" id="R-MMU-5658442">
    <property type="pathway name" value="Regulation of RAS by GAPs"/>
</dbReference>
<dbReference type="Reactome" id="R-MMU-5668541">
    <property type="pathway name" value="TNFR2 non-canonical NF-kB pathway"/>
</dbReference>
<dbReference type="Reactome" id="R-MMU-5676590">
    <property type="pathway name" value="NIK--&gt;noncanonical NF-kB signaling"/>
</dbReference>
<dbReference type="Reactome" id="R-MMU-5687128">
    <property type="pathway name" value="MAPK6/MAPK4 signaling"/>
</dbReference>
<dbReference type="Reactome" id="R-MMU-5689603">
    <property type="pathway name" value="UCH proteinases"/>
</dbReference>
<dbReference type="Reactome" id="R-MMU-5689880">
    <property type="pathway name" value="Ub-specific processing proteases"/>
</dbReference>
<dbReference type="Reactome" id="R-MMU-68867">
    <property type="pathway name" value="Assembly of the pre-replicative complex"/>
</dbReference>
<dbReference type="Reactome" id="R-MMU-68949">
    <property type="pathway name" value="Orc1 removal from chromatin"/>
</dbReference>
<dbReference type="Reactome" id="R-MMU-69017">
    <property type="pathway name" value="CDK-mediated phosphorylation and removal of Cdc6"/>
</dbReference>
<dbReference type="Reactome" id="R-MMU-69481">
    <property type="pathway name" value="G2/M Checkpoints"/>
</dbReference>
<dbReference type="Reactome" id="R-MMU-69601">
    <property type="pathway name" value="Ubiquitin Mediated Degradation of Phosphorylated Cdc25A"/>
</dbReference>
<dbReference type="Reactome" id="R-MMU-75815">
    <property type="pathway name" value="Ubiquitin-dependent degradation of Cyclin D"/>
</dbReference>
<dbReference type="Reactome" id="R-MMU-8852276">
    <property type="pathway name" value="The role of GTSE1 in G2/M progression after G2 checkpoint"/>
</dbReference>
<dbReference type="Reactome" id="R-MMU-8854050">
    <property type="pathway name" value="FBXL7 down-regulates AURKA during mitotic entry and in early mitosis"/>
</dbReference>
<dbReference type="Reactome" id="R-MMU-8939236">
    <property type="pathway name" value="RUNX1 regulates transcription of genes involved in differentiation of HSCs"/>
</dbReference>
<dbReference type="Reactome" id="R-MMU-8939902">
    <property type="pathway name" value="Regulation of RUNX2 expression and activity"/>
</dbReference>
<dbReference type="Reactome" id="R-MMU-8941858">
    <property type="pathway name" value="Regulation of RUNX3 expression and activity"/>
</dbReference>
<dbReference type="Reactome" id="R-MMU-8948751">
    <property type="pathway name" value="Regulation of PTEN stability and activity"/>
</dbReference>
<dbReference type="Reactome" id="R-MMU-8951664">
    <property type="pathway name" value="Neddylation"/>
</dbReference>
<dbReference type="Reactome" id="R-MMU-9020702">
    <property type="pathway name" value="Interleukin-1 signaling"/>
</dbReference>
<dbReference type="Reactome" id="R-MMU-9755511">
    <property type="pathway name" value="KEAP1-NFE2L2 pathway"/>
</dbReference>
<dbReference type="Reactome" id="R-MMU-9762114">
    <property type="pathway name" value="GSK3B and BTRC:CUL1-mediated-degradation of NFE2L2"/>
</dbReference>
<dbReference type="Reactome" id="R-MMU-983168">
    <property type="pathway name" value="Antigen processing: Ubiquitination &amp; Proteasome degradation"/>
</dbReference>
<dbReference type="Reactome" id="R-MMU-9907900">
    <property type="pathway name" value="Proteasome assembly"/>
</dbReference>
<dbReference type="BioGRID-ORCS" id="19179">
    <property type="hits" value="28 hits in 79 CRISPR screens"/>
</dbReference>
<dbReference type="CD-CODE" id="CE726F99">
    <property type="entry name" value="Postsynaptic density"/>
</dbReference>
<dbReference type="ChiTaRS" id="Psmc1">
    <property type="organism name" value="mouse"/>
</dbReference>
<dbReference type="PRO" id="PR:P62192"/>
<dbReference type="Proteomes" id="UP000000589">
    <property type="component" value="Chromosome 12"/>
</dbReference>
<dbReference type="RNAct" id="P62192">
    <property type="molecule type" value="protein"/>
</dbReference>
<dbReference type="Bgee" id="ENSMUSG00000021178">
    <property type="expression patterns" value="Expressed in embryonic brain and 77 other cell types or tissues"/>
</dbReference>
<dbReference type="ExpressionAtlas" id="P62192">
    <property type="expression patterns" value="baseline and differential"/>
</dbReference>
<dbReference type="GO" id="GO:0005829">
    <property type="term" value="C:cytosol"/>
    <property type="evidence" value="ECO:0007669"/>
    <property type="project" value="Ensembl"/>
</dbReference>
<dbReference type="GO" id="GO:0016020">
    <property type="term" value="C:membrane"/>
    <property type="evidence" value="ECO:0007669"/>
    <property type="project" value="UniProtKB-SubCell"/>
</dbReference>
<dbReference type="GO" id="GO:0005654">
    <property type="term" value="C:nucleoplasm"/>
    <property type="evidence" value="ECO:0007669"/>
    <property type="project" value="Ensembl"/>
</dbReference>
<dbReference type="GO" id="GO:0022624">
    <property type="term" value="C:proteasome accessory complex"/>
    <property type="evidence" value="ECO:0000314"/>
    <property type="project" value="UniProtKB"/>
</dbReference>
<dbReference type="GO" id="GO:0005838">
    <property type="term" value="C:proteasome regulatory particle"/>
    <property type="evidence" value="ECO:0000314"/>
    <property type="project" value="MGI"/>
</dbReference>
<dbReference type="GO" id="GO:0005524">
    <property type="term" value="F:ATP binding"/>
    <property type="evidence" value="ECO:0007669"/>
    <property type="project" value="UniProtKB-KW"/>
</dbReference>
<dbReference type="GO" id="GO:0016887">
    <property type="term" value="F:ATP hydrolysis activity"/>
    <property type="evidence" value="ECO:0007669"/>
    <property type="project" value="InterPro"/>
</dbReference>
<dbReference type="CDD" id="cd19502">
    <property type="entry name" value="RecA-like_PAN_like"/>
    <property type="match status" value="1"/>
</dbReference>
<dbReference type="FunFam" id="2.40.50.140:FF:000067">
    <property type="entry name" value="26S protease regulatory subunit 4"/>
    <property type="match status" value="1"/>
</dbReference>
<dbReference type="FunFam" id="1.10.8.60:FF:000007">
    <property type="entry name" value="26S proteasome regulatory subunit 4"/>
    <property type="match status" value="1"/>
</dbReference>
<dbReference type="FunFam" id="3.40.50.300:FF:000039">
    <property type="entry name" value="26S proteasome regulatory subunit 4"/>
    <property type="match status" value="1"/>
</dbReference>
<dbReference type="Gene3D" id="1.10.8.60">
    <property type="match status" value="1"/>
</dbReference>
<dbReference type="Gene3D" id="2.40.50.140">
    <property type="entry name" value="Nucleic acid-binding proteins"/>
    <property type="match status" value="1"/>
</dbReference>
<dbReference type="Gene3D" id="3.40.50.300">
    <property type="entry name" value="P-loop containing nucleotide triphosphate hydrolases"/>
    <property type="match status" value="1"/>
</dbReference>
<dbReference type="InterPro" id="IPR050221">
    <property type="entry name" value="26S_Proteasome_ATPase"/>
</dbReference>
<dbReference type="InterPro" id="IPR003593">
    <property type="entry name" value="AAA+_ATPase"/>
</dbReference>
<dbReference type="InterPro" id="IPR041569">
    <property type="entry name" value="AAA_lid_3"/>
</dbReference>
<dbReference type="InterPro" id="IPR003959">
    <property type="entry name" value="ATPase_AAA_core"/>
</dbReference>
<dbReference type="InterPro" id="IPR003960">
    <property type="entry name" value="ATPase_AAA_CS"/>
</dbReference>
<dbReference type="InterPro" id="IPR012340">
    <property type="entry name" value="NA-bd_OB-fold"/>
</dbReference>
<dbReference type="InterPro" id="IPR027417">
    <property type="entry name" value="P-loop_NTPase"/>
</dbReference>
<dbReference type="InterPro" id="IPR032501">
    <property type="entry name" value="Prot_ATP_ID_OB_2nd"/>
</dbReference>
<dbReference type="PANTHER" id="PTHR23073">
    <property type="entry name" value="26S PROTEASOME REGULATORY SUBUNIT"/>
    <property type="match status" value="1"/>
</dbReference>
<dbReference type="Pfam" id="PF00004">
    <property type="entry name" value="AAA"/>
    <property type="match status" value="1"/>
</dbReference>
<dbReference type="Pfam" id="PF17862">
    <property type="entry name" value="AAA_lid_3"/>
    <property type="match status" value="1"/>
</dbReference>
<dbReference type="Pfam" id="PF16450">
    <property type="entry name" value="Prot_ATP_ID_OB_C"/>
    <property type="match status" value="1"/>
</dbReference>
<dbReference type="SMART" id="SM00382">
    <property type="entry name" value="AAA"/>
    <property type="match status" value="1"/>
</dbReference>
<dbReference type="SUPFAM" id="SSF52540">
    <property type="entry name" value="P-loop containing nucleoside triphosphate hydrolases"/>
    <property type="match status" value="1"/>
</dbReference>
<dbReference type="PROSITE" id="PS00674">
    <property type="entry name" value="AAA"/>
    <property type="match status" value="1"/>
</dbReference>
<sequence>MGQSQSGGHGPGGGKKDDKDKKKKYEPPVPTRVGKKKKKTKGPDAASKLPLVTPHTQCRLKLLKLERIKDYLLMEEEFIRNQEQMKPLEEKQEEERSKVDDLRGTPMSVGTLEEIIDDNHAIVSTSVGSEHYVSILSFVDKDLLEPGCSVLLNHKVHAVIGVLMDDTDPLVTVMKVEKAPQETYADIGGLDNQIQEIKESVELPLTHPEYYEEMGIKPPKGVILYGPPGTGKTLLAKAVANQTSATFLRVVGSELIQKYLGDGPKLVRELFRVAEEHAPSIVFIDEIDAIGTKRYDSNSGGEREIQRTMLELLNQLDGFDSRGDVKVIMATNRIETLDPALIRPGRIDRKIEFPLPDEKTKKRIFQIHTSRMTLADDVTLDDLIMAKDDLSGADIKAICTEAGLMALRERRMKVTNEDFKKSKENVLYKKQEGTPEGLYL</sequence>